<reference key="1">
    <citation type="journal article" date="2001" name="J. Bacteriol.">
        <title>The PPP-family protein phosphatases PrpA and PrpB of Salmonella enterica serovar Typhimurium possess distinct biochemical properties.</title>
        <authorList>
            <person name="Shi L."/>
            <person name="Kehres D.G."/>
            <person name="Maguire M.E."/>
        </authorList>
    </citation>
    <scope>NUCLEOTIDE SEQUENCE [GENOMIC DNA]</scope>
</reference>
<reference key="2">
    <citation type="journal article" date="2001" name="Nature">
        <title>Complete genome sequence of Salmonella enterica serovar Typhimurium LT2.</title>
        <authorList>
            <person name="McClelland M."/>
            <person name="Sanderson K.E."/>
            <person name="Spieth J."/>
            <person name="Clifton S.W."/>
            <person name="Latreille P."/>
            <person name="Courtney L."/>
            <person name="Porwollik S."/>
            <person name="Ali J."/>
            <person name="Dante M."/>
            <person name="Du F."/>
            <person name="Hou S."/>
            <person name="Layman D."/>
            <person name="Leonard S."/>
            <person name="Nguyen C."/>
            <person name="Scott K."/>
            <person name="Holmes A."/>
            <person name="Grewal N."/>
            <person name="Mulvaney E."/>
            <person name="Ryan E."/>
            <person name="Sun H."/>
            <person name="Florea L."/>
            <person name="Miller W."/>
            <person name="Stoneking T."/>
            <person name="Nhan M."/>
            <person name="Waterston R."/>
            <person name="Wilson R.K."/>
        </authorList>
    </citation>
    <scope>NUCLEOTIDE SEQUENCE [LARGE SCALE GENOMIC DNA]</scope>
    <source>
        <strain>LT2 / SGSC1412 / ATCC 700720</strain>
    </source>
</reference>
<protein>
    <recommendedName>
        <fullName>Serine/threonine-protein phosphatase 2</fullName>
        <ecNumber>3.1.3.16</ecNumber>
    </recommendedName>
</protein>
<keyword id="KW-0378">Hydrolase</keyword>
<keyword id="KW-0464">Manganese</keyword>
<keyword id="KW-0479">Metal-binding</keyword>
<keyword id="KW-0904">Protein phosphatase</keyword>
<keyword id="KW-1185">Reference proteome</keyword>
<organism>
    <name type="scientific">Salmonella typhimurium (strain LT2 / SGSC1412 / ATCC 700720)</name>
    <dbReference type="NCBI Taxonomy" id="99287"/>
    <lineage>
        <taxon>Bacteria</taxon>
        <taxon>Pseudomonadati</taxon>
        <taxon>Pseudomonadota</taxon>
        <taxon>Gammaproteobacteria</taxon>
        <taxon>Enterobacterales</taxon>
        <taxon>Enterobacteriaceae</taxon>
        <taxon>Salmonella</taxon>
    </lineage>
</organism>
<name>PRP2_SALTY</name>
<sequence length="218" mass="25025">MELIRYADINSDLYRHIWVVGDIHGCYSLLLTRLAQLNFSPDTDLLISTGDNIDRGKENLETLRLLNTPWFISVVGNHEAMALDAFETQDGNFWYVNGGYWYDSVTEKDRQEATELLLTFKQRPHIIEVETSSKKYVIAHADYPDDSYDYGKQVDIDSVLWSRDRLLGSLQGNIHPIRGADTFIFGHMIVDYTTTFANQIYIDTGSFCSGNLSFFKIK</sequence>
<dbReference type="EC" id="3.1.3.16"/>
<dbReference type="EMBL" id="AY049951">
    <property type="protein sequence ID" value="AAL09832.1"/>
    <property type="molecule type" value="Genomic_DNA"/>
</dbReference>
<dbReference type="EMBL" id="AE006468">
    <property type="protein sequence ID" value="AAL21787.1"/>
    <property type="molecule type" value="Genomic_DNA"/>
</dbReference>
<dbReference type="RefSeq" id="NP_461828.1">
    <property type="nucleotide sequence ID" value="NC_003197.2"/>
</dbReference>
<dbReference type="RefSeq" id="WP_000420452.1">
    <property type="nucleotide sequence ID" value="NC_003197.2"/>
</dbReference>
<dbReference type="SMR" id="Q8ZMH3"/>
<dbReference type="STRING" id="99287.STM2907"/>
<dbReference type="PaxDb" id="99287-STM2907"/>
<dbReference type="GeneID" id="1254430"/>
<dbReference type="KEGG" id="stm:STM2907"/>
<dbReference type="PATRIC" id="fig|99287.12.peg.3061"/>
<dbReference type="HOGENOM" id="CLU_023125_1_1_6"/>
<dbReference type="OMA" id="DPACDRL"/>
<dbReference type="PhylomeDB" id="Q8ZMH3"/>
<dbReference type="BioCyc" id="SENT99287:STM2907-MONOMER"/>
<dbReference type="Proteomes" id="UP000001014">
    <property type="component" value="Chromosome"/>
</dbReference>
<dbReference type="GO" id="GO:0005737">
    <property type="term" value="C:cytoplasm"/>
    <property type="evidence" value="ECO:0000318"/>
    <property type="project" value="GO_Central"/>
</dbReference>
<dbReference type="GO" id="GO:0008803">
    <property type="term" value="F:bis(5'-nucleosyl)-tetraphosphatase (symmetrical) activity"/>
    <property type="evidence" value="ECO:0000318"/>
    <property type="project" value="GO_Central"/>
</dbReference>
<dbReference type="GO" id="GO:0046872">
    <property type="term" value="F:metal ion binding"/>
    <property type="evidence" value="ECO:0007669"/>
    <property type="project" value="UniProtKB-KW"/>
</dbReference>
<dbReference type="GO" id="GO:0016791">
    <property type="term" value="F:phosphatase activity"/>
    <property type="evidence" value="ECO:0000318"/>
    <property type="project" value="GO_Central"/>
</dbReference>
<dbReference type="GO" id="GO:0004722">
    <property type="term" value="F:protein serine/threonine phosphatase activity"/>
    <property type="evidence" value="ECO:0007669"/>
    <property type="project" value="UniProtKB-EC"/>
</dbReference>
<dbReference type="GO" id="GO:0110154">
    <property type="term" value="P:RNA decapping"/>
    <property type="evidence" value="ECO:0000318"/>
    <property type="project" value="GO_Central"/>
</dbReference>
<dbReference type="Gene3D" id="3.60.21.10">
    <property type="match status" value="1"/>
</dbReference>
<dbReference type="InterPro" id="IPR050126">
    <property type="entry name" value="Ap4A_hydrolase"/>
</dbReference>
<dbReference type="InterPro" id="IPR004843">
    <property type="entry name" value="Calcineurin-like_PHP_ApaH"/>
</dbReference>
<dbReference type="InterPro" id="IPR029052">
    <property type="entry name" value="Metallo-depent_PP-like"/>
</dbReference>
<dbReference type="NCBIfam" id="NF007425">
    <property type="entry name" value="PRK09968.1"/>
    <property type="match status" value="1"/>
</dbReference>
<dbReference type="PANTHER" id="PTHR42850">
    <property type="entry name" value="METALLOPHOSPHOESTERASE"/>
    <property type="match status" value="1"/>
</dbReference>
<dbReference type="PANTHER" id="PTHR42850:SF8">
    <property type="entry name" value="SERINE_THREONINE-PROTEIN PHOSPHATASE 2"/>
    <property type="match status" value="1"/>
</dbReference>
<dbReference type="Pfam" id="PF00149">
    <property type="entry name" value="Metallophos"/>
    <property type="match status" value="1"/>
</dbReference>
<dbReference type="SUPFAM" id="SSF56300">
    <property type="entry name" value="Metallo-dependent phosphatases"/>
    <property type="match status" value="1"/>
</dbReference>
<comment type="function">
    <text>Can hydrolyze phosphorylated Ser-, Thr- or Tyr-substrates in vitro. The natural substrate is unknown.</text>
</comment>
<comment type="catalytic activity">
    <reaction>
        <text>O-phospho-L-seryl-[protein] + H2O = L-seryl-[protein] + phosphate</text>
        <dbReference type="Rhea" id="RHEA:20629"/>
        <dbReference type="Rhea" id="RHEA-COMP:9863"/>
        <dbReference type="Rhea" id="RHEA-COMP:11604"/>
        <dbReference type="ChEBI" id="CHEBI:15377"/>
        <dbReference type="ChEBI" id="CHEBI:29999"/>
        <dbReference type="ChEBI" id="CHEBI:43474"/>
        <dbReference type="ChEBI" id="CHEBI:83421"/>
        <dbReference type="EC" id="3.1.3.16"/>
    </reaction>
</comment>
<comment type="catalytic activity">
    <reaction>
        <text>O-phospho-L-threonyl-[protein] + H2O = L-threonyl-[protein] + phosphate</text>
        <dbReference type="Rhea" id="RHEA:47004"/>
        <dbReference type="Rhea" id="RHEA-COMP:11060"/>
        <dbReference type="Rhea" id="RHEA-COMP:11605"/>
        <dbReference type="ChEBI" id="CHEBI:15377"/>
        <dbReference type="ChEBI" id="CHEBI:30013"/>
        <dbReference type="ChEBI" id="CHEBI:43474"/>
        <dbReference type="ChEBI" id="CHEBI:61977"/>
        <dbReference type="EC" id="3.1.3.16"/>
    </reaction>
</comment>
<comment type="cofactor">
    <cofactor>
        <name>Mn(2+)</name>
        <dbReference type="ChEBI" id="CHEBI:29035"/>
    </cofactor>
</comment>
<comment type="activity regulation">
    <text>Inhibited by cadmium, copper, zinc when added activity but with less efficiency.</text>
</comment>
<comment type="biophysicochemical properties">
    <phDependence>
        <text>Optimum pH is 7.5-8.5.</text>
    </phDependence>
    <temperatureDependence>
        <text>Optimum temperature is 30-37 degrees Celsius.</text>
    </temperatureDependence>
</comment>
<comment type="miscellaneous">
    <text>Neither magnesium nor calcium stimulates activity.</text>
</comment>
<comment type="similarity">
    <text evidence="2">Belongs to the PPP phosphatase family. PP-1 subfamily.</text>
</comment>
<evidence type="ECO:0000250" key="1"/>
<evidence type="ECO:0000305" key="2"/>
<feature type="chain" id="PRO_0000058911" description="Serine/threonine-protein phosphatase 2">
    <location>
        <begin position="1"/>
        <end position="218"/>
    </location>
</feature>
<feature type="active site" description="Proton donor" evidence="1">
    <location>
        <position position="78"/>
    </location>
</feature>
<feature type="binding site" evidence="1">
    <location>
        <position position="22"/>
    </location>
    <ligand>
        <name>Mn(2+)</name>
        <dbReference type="ChEBI" id="CHEBI:29035"/>
        <label>1</label>
    </ligand>
</feature>
<feature type="binding site" evidence="1">
    <location>
        <position position="24"/>
    </location>
    <ligand>
        <name>Mn(2+)</name>
        <dbReference type="ChEBI" id="CHEBI:29035"/>
        <label>1</label>
    </ligand>
</feature>
<feature type="binding site" evidence="1">
    <location>
        <position position="51"/>
    </location>
    <ligand>
        <name>Mn(2+)</name>
        <dbReference type="ChEBI" id="CHEBI:29035"/>
        <label>1</label>
    </ligand>
</feature>
<feature type="binding site" evidence="1">
    <location>
        <position position="51"/>
    </location>
    <ligand>
        <name>Mn(2+)</name>
        <dbReference type="ChEBI" id="CHEBI:29035"/>
        <label>2</label>
    </ligand>
</feature>
<feature type="binding site" evidence="1">
    <location>
        <position position="77"/>
    </location>
    <ligand>
        <name>Mn(2+)</name>
        <dbReference type="ChEBI" id="CHEBI:29035"/>
        <label>2</label>
    </ligand>
</feature>
<feature type="binding site" evidence="1">
    <location>
        <position position="187"/>
    </location>
    <ligand>
        <name>Mn(2+)</name>
        <dbReference type="ChEBI" id="CHEBI:29035"/>
        <label>2</label>
    </ligand>
</feature>
<gene>
    <name type="primary">pphB</name>
    <name type="synonym">prpB</name>
    <name type="ordered locus">STM2907</name>
</gene>
<accession>Q8ZMH3</accession>
<accession>Q79S89</accession>
<proteinExistence type="evidence at protein level"/>